<name>TSAK_ORITS</name>
<evidence type="ECO:0000255" key="1"/>
<evidence type="ECO:0000256" key="2">
    <source>
        <dbReference type="SAM" id="MobiDB-lite"/>
    </source>
</evidence>
<protein>
    <recommendedName>
        <fullName>56 kDa type-specific antigen</fullName>
        <shortName>TSA</shortName>
    </recommendedName>
    <alternativeName>
        <fullName>56 kDa scrub typhus antigen</fullName>
    </alternativeName>
    <alternativeName>
        <fullName>STA56</fullName>
    </alternativeName>
    <alternativeName>
        <fullName>TSK56</fullName>
    </alternativeName>
</protein>
<accession>P37915</accession>
<comment type="function">
    <text>May be an adherent factor for rickettsial adsorption to the host-cell surface and a determinant of virulence of individual rickettsial strain. It is the major outer membrane protein.</text>
</comment>
<comment type="subcellular location">
    <subcellularLocation>
        <location>Cell membrane</location>
        <topology>Multi-pass membrane protein</topology>
    </subcellularLocation>
</comment>
<sequence length="532" mass="56786">MKKIMLIASAMSALSLPFSASAIELGEEGLECGPYAKVGVVGGMITGVESARLDPADAEGKKHLSLTNGLPFGGTLAAGMTIAPGFRAEIGVMYLTNITAQVEEGKVKADSVGETKADSVGGKDAPIRKRFKLTPPQPTIMPISIAVRDFGIDIPNQTSAASTSRSLRLNDEQRAAARIAWLKNCAGIDYRVKNPNDPNGPMVINPILLNIPQGNPNPVGNPPQRANPPAGFAIHNHEQWRHLVVGLAALSNANKPSASPVKVLSDKITQIYSDIKHLADIAGIDVPDTSLPNSASVEQIQNKMQELNDLLEELRESFDGYLGGNAFANQIQLNFVMPQQAQQQGQGQQQQAQATAQEAVAAAAVRLLNGNDQIAQLYKDLVKLQRHAGIKKAMEKLAAQQEEDAKNQGEGDCKQQQGTSEKSKKGKDKEAEFDLSMIVGQVKLYADVMITESVSIYAGVGAGLAYTSGKIDNKDIKGHTGMVASGALGVAINAAEGVYVDIEGSYMYSFSKIEEKYSINPLMASVSVRYNF</sequence>
<proteinExistence type="inferred from homology"/>
<organism>
    <name type="scientific">Orientia tsutsugamushi</name>
    <name type="common">Rickettsia tsutsugamushi</name>
    <dbReference type="NCBI Taxonomy" id="784"/>
    <lineage>
        <taxon>Bacteria</taxon>
        <taxon>Pseudomonadati</taxon>
        <taxon>Pseudomonadota</taxon>
        <taxon>Alphaproteobacteria</taxon>
        <taxon>Rickettsiales</taxon>
        <taxon>Rickettsiaceae</taxon>
        <taxon>Rickettsieae</taxon>
        <taxon>Orientia</taxon>
    </lineage>
</organism>
<keyword id="KW-1003">Cell membrane</keyword>
<keyword id="KW-0472">Membrane</keyword>
<keyword id="KW-0732">Signal</keyword>
<keyword id="KW-0812">Transmembrane</keyword>
<keyword id="KW-1133">Transmembrane helix</keyword>
<keyword id="KW-0843">Virulence</keyword>
<feature type="signal peptide" evidence="1">
    <location>
        <begin position="1"/>
        <end position="22"/>
    </location>
</feature>
<feature type="chain" id="PRO_0000022592" description="56 kDa type-specific antigen">
    <location>
        <begin position="23"/>
        <end position="532"/>
    </location>
</feature>
<feature type="transmembrane region" description="Helical" evidence="1">
    <location>
        <begin position="67"/>
        <end position="87"/>
    </location>
</feature>
<feature type="transmembrane region" description="Helical" evidence="1">
    <location>
        <begin position="480"/>
        <end position="500"/>
    </location>
</feature>
<feature type="region of interest" description="Disordered" evidence="2">
    <location>
        <begin position="401"/>
        <end position="428"/>
    </location>
</feature>
<feature type="compositionally biased region" description="Basic and acidic residues" evidence="2">
    <location>
        <begin position="403"/>
        <end position="413"/>
    </location>
</feature>
<reference key="1">
    <citation type="journal article" date="1990" name="Infect. Immun.">
        <title>The 56-kilodalton major protein antigen of Rickettsia tsutsugamushi: molecular cloning and sequence analysis of the sta56 gene and precise identification of a strain-specific epitope.</title>
        <authorList>
            <person name="Stover C.K."/>
            <person name="Marana D.P."/>
            <person name="Carter J.M."/>
            <person name="Roe B.A."/>
            <person name="Mardis E."/>
            <person name="Oaks E.V."/>
        </authorList>
    </citation>
    <scope>NUCLEOTIDE SEQUENCE [GENOMIC DNA]</scope>
    <source>
        <strain>Karp</strain>
    </source>
</reference>
<dbReference type="EMBL" id="M33004">
    <property type="protein sequence ID" value="AAA26391.1"/>
    <property type="molecule type" value="Genomic_DNA"/>
</dbReference>
<dbReference type="PIR" id="B60106">
    <property type="entry name" value="B60106"/>
</dbReference>
<dbReference type="GO" id="GO:0005886">
    <property type="term" value="C:plasma membrane"/>
    <property type="evidence" value="ECO:0007669"/>
    <property type="project" value="UniProtKB-SubCell"/>
</dbReference>
<dbReference type="Gene3D" id="2.40.160.20">
    <property type="match status" value="1"/>
</dbReference>
<dbReference type="InterPro" id="IPR011250">
    <property type="entry name" value="OMP/PagP_b-brl"/>
</dbReference>
<dbReference type="InterPro" id="IPR004933">
    <property type="entry name" value="TSA"/>
</dbReference>
<dbReference type="NCBIfam" id="NF033390">
    <property type="entry name" value="Orientia_TSA56"/>
    <property type="match status" value="1"/>
</dbReference>
<dbReference type="Pfam" id="PF03249">
    <property type="entry name" value="TSA"/>
    <property type="match status" value="1"/>
</dbReference>
<dbReference type="PRINTS" id="PR01707">
    <property type="entry name" value="56KDTSANTIGN"/>
</dbReference>
<dbReference type="SUPFAM" id="SSF56925">
    <property type="entry name" value="OMPA-like"/>
    <property type="match status" value="1"/>
</dbReference>